<dbReference type="EC" id="2.6.1.102" evidence="2"/>
<dbReference type="EMBL" id="X59554">
    <property type="protein sequence ID" value="CAA42137.1"/>
    <property type="molecule type" value="Genomic_DNA"/>
</dbReference>
<dbReference type="PIR" id="S28471">
    <property type="entry name" value="S28471"/>
</dbReference>
<dbReference type="SMR" id="Q06953"/>
<dbReference type="BioCyc" id="MetaCyc:MONOMER-13575"/>
<dbReference type="UniPathway" id="UPA00281"/>
<dbReference type="GO" id="GO:0102933">
    <property type="term" value="F:GDP-4-dehydro-6-deoxy-D-mannose-4-aminotransferase activity"/>
    <property type="evidence" value="ECO:0007669"/>
    <property type="project" value="UniProtKB-EC"/>
</dbReference>
<dbReference type="GO" id="GO:0030170">
    <property type="term" value="F:pyridoxal phosphate binding"/>
    <property type="evidence" value="ECO:0007669"/>
    <property type="project" value="TreeGrafter"/>
</dbReference>
<dbReference type="GO" id="GO:0009243">
    <property type="term" value="P:O antigen biosynthetic process"/>
    <property type="evidence" value="ECO:0007669"/>
    <property type="project" value="UniProtKB-UniPathway"/>
</dbReference>
<dbReference type="CDD" id="cd00616">
    <property type="entry name" value="AHBA_syn"/>
    <property type="match status" value="1"/>
</dbReference>
<dbReference type="FunFam" id="3.90.1150.10:FF:000148">
    <property type="entry name" value="Perosamine synthase"/>
    <property type="match status" value="1"/>
</dbReference>
<dbReference type="Gene3D" id="3.90.1150.10">
    <property type="entry name" value="Aspartate Aminotransferase, domain 1"/>
    <property type="match status" value="1"/>
</dbReference>
<dbReference type="Gene3D" id="3.40.640.10">
    <property type="entry name" value="Type I PLP-dependent aspartate aminotransferase-like (Major domain)"/>
    <property type="match status" value="1"/>
</dbReference>
<dbReference type="InterPro" id="IPR000653">
    <property type="entry name" value="DegT/StrS_aminotransferase"/>
</dbReference>
<dbReference type="InterPro" id="IPR015424">
    <property type="entry name" value="PyrdxlP-dep_Trfase"/>
</dbReference>
<dbReference type="InterPro" id="IPR015421">
    <property type="entry name" value="PyrdxlP-dep_Trfase_major"/>
</dbReference>
<dbReference type="InterPro" id="IPR015422">
    <property type="entry name" value="PyrdxlP-dep_Trfase_small"/>
</dbReference>
<dbReference type="PANTHER" id="PTHR30244:SF34">
    <property type="entry name" value="DTDP-4-AMINO-4,6-DIDEOXYGALACTOSE TRANSAMINASE"/>
    <property type="match status" value="1"/>
</dbReference>
<dbReference type="PANTHER" id="PTHR30244">
    <property type="entry name" value="TRANSAMINASE"/>
    <property type="match status" value="1"/>
</dbReference>
<dbReference type="Pfam" id="PF01041">
    <property type="entry name" value="DegT_DnrJ_EryC1"/>
    <property type="match status" value="1"/>
</dbReference>
<dbReference type="PIRSF" id="PIRSF000390">
    <property type="entry name" value="PLP_StrS"/>
    <property type="match status" value="1"/>
</dbReference>
<dbReference type="SUPFAM" id="SSF53383">
    <property type="entry name" value="PLP-dependent transferases"/>
    <property type="match status" value="1"/>
</dbReference>
<feature type="chain" id="PRO_0000430721" description="GDP-perosamine synthase">
    <location>
        <begin position="1"/>
        <end position="367"/>
    </location>
</feature>
<feature type="modified residue" description="N6-(pyridoxal phosphate)lysine" evidence="1">
    <location>
        <position position="181"/>
    </location>
</feature>
<keyword id="KW-0032">Aminotransferase</keyword>
<keyword id="KW-0448">Lipopolysaccharide biosynthesis</keyword>
<keyword id="KW-0663">Pyridoxal phosphate</keyword>
<keyword id="KW-0808">Transferase</keyword>
<accession>Q06953</accession>
<organism>
    <name type="scientific">Vibrio cholerae</name>
    <dbReference type="NCBI Taxonomy" id="666"/>
    <lineage>
        <taxon>Bacteria</taxon>
        <taxon>Pseudomonadati</taxon>
        <taxon>Pseudomonadota</taxon>
        <taxon>Gammaproteobacteria</taxon>
        <taxon>Vibrionales</taxon>
        <taxon>Vibrionaceae</taxon>
        <taxon>Vibrio</taxon>
    </lineage>
</organism>
<proteinExistence type="evidence at protein level"/>
<gene>
    <name evidence="3" type="primary">rfbE</name>
</gene>
<comment type="function">
    <text evidence="2">Catalyzes the synthesis of GDP-perosamine from GDP-4-keto-6-deoxy-D-mannose and L-glutamate. Also shows weak activity with L-glutamine.</text>
</comment>
<comment type="catalytic activity">
    <reaction evidence="2">
        <text>GDP-alpha-D-perosamine + 2-oxoglutarate = GDP-4-dehydro-alpha-D-rhamnose + L-glutamate</text>
        <dbReference type="Rhea" id="RHEA:36779"/>
        <dbReference type="ChEBI" id="CHEBI:16810"/>
        <dbReference type="ChEBI" id="CHEBI:29985"/>
        <dbReference type="ChEBI" id="CHEBI:57964"/>
        <dbReference type="ChEBI" id="CHEBI:73996"/>
        <dbReference type="EC" id="2.6.1.102"/>
    </reaction>
</comment>
<comment type="cofactor">
    <cofactor evidence="2">
        <name>pyridoxal 5'-phosphate</name>
        <dbReference type="ChEBI" id="CHEBI:597326"/>
    </cofactor>
</comment>
<comment type="biophysicochemical properties">
    <kinetics>
        <KM evidence="2">0.06 mM for GDP-4-keto-6-deoxy-D-mannose</KM>
        <KM evidence="2">0.1 mM for L-glutamate</KM>
    </kinetics>
    <phDependence>
        <text evidence="2">Optimum pH is 8.0.</text>
    </phDependence>
</comment>
<comment type="pathway">
    <text evidence="3">Bacterial outer membrane biogenesis; LPS O-antigen biosynthesis.</text>
</comment>
<comment type="subunit">
    <text evidence="2">Homotetramer.</text>
</comment>
<comment type="similarity">
    <text evidence="4">Belongs to the DegT/DnrJ/EryC1 family.</text>
</comment>
<name>GDPPS_VIBCL</name>
<protein>
    <recommendedName>
        <fullName evidence="4">GDP-perosamine synthase</fullName>
        <ecNumber evidence="2">2.6.1.102</ecNumber>
    </recommendedName>
</protein>
<sequence length="367" mass="41011">MIPVYEPSLDGNERKYLNDCIDSGWVSSRGKYIDRFETEFAEFLKVKHATTVSNGTVALHLAMSALGITQGDEVIVPTFTYVASVNTIVQCGALPVFAEIEGESLQVSVEDVKRKINKKTKAVMAVHIYGQACDIQSLRDLCDEHGLYLIEDCAEAIGTAVNGKKVGTFGDVSTFSFFGNKTITSGEGGMVVSNSDIIIDKCLRLKNQGVVAGKRYWHDLVAYNYRMTNLCAAIGVAQLERVDKIIKAKRDIAEIYRSELAGLPMQVHKESNGTFHSYWLTSIILDQEFEVHRDGLMTFLENNDIESRPFFYPAHTLPMYEHLAEKTAFPLSNSYSHRGINLPSWPGLCDDQVKEICNCIKNYFNCI</sequence>
<evidence type="ECO:0000250" key="1">
    <source>
        <dbReference type="UniProtKB" id="Q8ZNF3"/>
    </source>
</evidence>
<evidence type="ECO:0000269" key="2">
    <source>
    </source>
</evidence>
<evidence type="ECO:0000303" key="3">
    <source>
    </source>
</evidence>
<evidence type="ECO:0000305" key="4"/>
<reference key="1">
    <citation type="journal article" date="1992" name="Proc. Natl. Acad. Sci. U.S.A.">
        <title>Serotype conversion in Vibrio cholerae O1.</title>
        <authorList>
            <person name="Stroeher U.H."/>
            <person name="Karageorgos L.E."/>
            <person name="Morona R."/>
            <person name="Manning P.A."/>
        </authorList>
    </citation>
    <scope>NUCLEOTIDE SEQUENCE [GENOMIC DNA]</scope>
    <source>
        <strain>El Tor O17 / Serotype O1</strain>
    </source>
</reference>
<reference key="2">
    <citation type="journal article" date="1995" name="Gene">
        <title>A putative pathway for perosamine biosynthesis is the first function encoded within the rfb region of Vibrio cholerae O1.</title>
        <authorList>
            <person name="Stroeher U.H."/>
            <person name="Karageorgos L.E."/>
            <person name="Brown M.H."/>
            <person name="Morona R."/>
            <person name="Manning P.A."/>
        </authorList>
    </citation>
    <scope>NUCLEOTIDE SEQUENCE [GENOMIC DNA]</scope>
    <scope>GENE NAME</scope>
    <scope>PATHWAY</scope>
    <source>
        <strain>Serotype O1</strain>
    </source>
</reference>
<reference key="3">
    <citation type="journal article" date="2001" name="Glycobiology">
        <title>Expression and identification of the RfbE protein from Vibrio cholerae O1 and its use for the enzymatic synthesis of GDP-D-perosamine.</title>
        <authorList>
            <person name="Albermann C."/>
            <person name="Piepersberg W."/>
        </authorList>
    </citation>
    <scope>FUNCTION</scope>
    <scope>CATALYTIC ACTIVITY</scope>
    <scope>COFACTOR</scope>
    <scope>BIOPHYSICOCHEMICAL PROPERTIES</scope>
    <scope>SUBUNIT</scope>
    <source>
        <strain>Serotype O1</strain>
    </source>
</reference>